<keyword id="KW-0413">Isomerase</keyword>
<keyword id="KW-0479">Metal-binding</keyword>
<keyword id="KW-0862">Zinc</keyword>
<feature type="chain" id="PRO_1000062003" description="4-deoxy-L-threo-5-hexosulose-uronate ketol-isomerase">
    <location>
        <begin position="1"/>
        <end position="278"/>
    </location>
</feature>
<feature type="binding site" evidence="1">
    <location>
        <position position="196"/>
    </location>
    <ligand>
        <name>Zn(2+)</name>
        <dbReference type="ChEBI" id="CHEBI:29105"/>
    </ligand>
</feature>
<feature type="binding site" evidence="1">
    <location>
        <position position="198"/>
    </location>
    <ligand>
        <name>Zn(2+)</name>
        <dbReference type="ChEBI" id="CHEBI:29105"/>
    </ligand>
</feature>
<feature type="binding site" evidence="1">
    <location>
        <position position="203"/>
    </location>
    <ligand>
        <name>Zn(2+)</name>
        <dbReference type="ChEBI" id="CHEBI:29105"/>
    </ligand>
</feature>
<feature type="binding site" evidence="1">
    <location>
        <position position="245"/>
    </location>
    <ligand>
        <name>Zn(2+)</name>
        <dbReference type="ChEBI" id="CHEBI:29105"/>
    </ligand>
</feature>
<organism>
    <name type="scientific">Yersinia pseudotuberculosis serotype O:1b (strain IP 31758)</name>
    <dbReference type="NCBI Taxonomy" id="349747"/>
    <lineage>
        <taxon>Bacteria</taxon>
        <taxon>Pseudomonadati</taxon>
        <taxon>Pseudomonadota</taxon>
        <taxon>Gammaproteobacteria</taxon>
        <taxon>Enterobacterales</taxon>
        <taxon>Yersiniaceae</taxon>
        <taxon>Yersinia</taxon>
    </lineage>
</organism>
<accession>A7FHE3</accession>
<reference key="1">
    <citation type="journal article" date="2007" name="PLoS Genet.">
        <title>The complete genome sequence of Yersinia pseudotuberculosis IP31758, the causative agent of Far East scarlet-like fever.</title>
        <authorList>
            <person name="Eppinger M."/>
            <person name="Rosovitz M.J."/>
            <person name="Fricke W.F."/>
            <person name="Rasko D.A."/>
            <person name="Kokorina G."/>
            <person name="Fayolle C."/>
            <person name="Lindler L.E."/>
            <person name="Carniel E."/>
            <person name="Ravel J."/>
        </authorList>
    </citation>
    <scope>NUCLEOTIDE SEQUENCE [LARGE SCALE GENOMIC DNA]</scope>
    <source>
        <strain>IP 31758</strain>
    </source>
</reference>
<protein>
    <recommendedName>
        <fullName evidence="1">4-deoxy-L-threo-5-hexosulose-uronate ketol-isomerase</fullName>
        <ecNumber evidence="1">5.3.1.17</ecNumber>
    </recommendedName>
    <alternativeName>
        <fullName evidence="1">5-keto-4-deoxyuronate isomerase</fullName>
    </alternativeName>
    <alternativeName>
        <fullName evidence="1">DKI isomerase</fullName>
    </alternativeName>
</protein>
<evidence type="ECO:0000255" key="1">
    <source>
        <dbReference type="HAMAP-Rule" id="MF_00687"/>
    </source>
</evidence>
<dbReference type="EC" id="5.3.1.17" evidence="1"/>
<dbReference type="EMBL" id="CP000720">
    <property type="protein sequence ID" value="ABS46451.1"/>
    <property type="molecule type" value="Genomic_DNA"/>
</dbReference>
<dbReference type="RefSeq" id="WP_012105015.1">
    <property type="nucleotide sequence ID" value="NC_009708.1"/>
</dbReference>
<dbReference type="SMR" id="A7FHE3"/>
<dbReference type="KEGG" id="ypi:YpsIP31758_1694"/>
<dbReference type="HOGENOM" id="CLU_062609_0_0_6"/>
<dbReference type="UniPathway" id="UPA00545">
    <property type="reaction ID" value="UER00826"/>
</dbReference>
<dbReference type="Proteomes" id="UP000002412">
    <property type="component" value="Chromosome"/>
</dbReference>
<dbReference type="GO" id="GO:0008697">
    <property type="term" value="F:4-deoxy-L-threo-5-hexosulose-uronate ketol-isomerase activity"/>
    <property type="evidence" value="ECO:0007669"/>
    <property type="project" value="UniProtKB-UniRule"/>
</dbReference>
<dbReference type="GO" id="GO:0008270">
    <property type="term" value="F:zinc ion binding"/>
    <property type="evidence" value="ECO:0007669"/>
    <property type="project" value="UniProtKB-UniRule"/>
</dbReference>
<dbReference type="GO" id="GO:0019698">
    <property type="term" value="P:D-galacturonate catabolic process"/>
    <property type="evidence" value="ECO:0007669"/>
    <property type="project" value="TreeGrafter"/>
</dbReference>
<dbReference type="GO" id="GO:0042840">
    <property type="term" value="P:D-glucuronate catabolic process"/>
    <property type="evidence" value="ECO:0007669"/>
    <property type="project" value="TreeGrafter"/>
</dbReference>
<dbReference type="GO" id="GO:0045490">
    <property type="term" value="P:pectin catabolic process"/>
    <property type="evidence" value="ECO:0007669"/>
    <property type="project" value="UniProtKB-UniRule"/>
</dbReference>
<dbReference type="CDD" id="cd20491">
    <property type="entry name" value="cupin_KduI_C"/>
    <property type="match status" value="1"/>
</dbReference>
<dbReference type="CDD" id="cd20294">
    <property type="entry name" value="cupin_KduI_N"/>
    <property type="match status" value="1"/>
</dbReference>
<dbReference type="FunFam" id="2.60.120.10:FF:000018">
    <property type="entry name" value="4-deoxy-L-threo-5-hexosulose-uronate ketol-isomerase"/>
    <property type="match status" value="1"/>
</dbReference>
<dbReference type="FunFam" id="2.60.120.520:FF:000001">
    <property type="entry name" value="4-deoxy-L-threo-5-hexosulose-uronate ketol-isomerase"/>
    <property type="match status" value="1"/>
</dbReference>
<dbReference type="Gene3D" id="2.60.120.10">
    <property type="entry name" value="Jelly Rolls"/>
    <property type="match status" value="1"/>
</dbReference>
<dbReference type="Gene3D" id="2.60.120.520">
    <property type="entry name" value="pectin degrading enzyme 5-keto 4- deoxyuronate isomerase, domain 1"/>
    <property type="match status" value="1"/>
</dbReference>
<dbReference type="HAMAP" id="MF_00687">
    <property type="entry name" value="KduI"/>
    <property type="match status" value="1"/>
</dbReference>
<dbReference type="InterPro" id="IPR007045">
    <property type="entry name" value="KduI"/>
</dbReference>
<dbReference type="InterPro" id="IPR021120">
    <property type="entry name" value="KduI/IolB_isomerase"/>
</dbReference>
<dbReference type="InterPro" id="IPR027449">
    <property type="entry name" value="KduI_N"/>
</dbReference>
<dbReference type="InterPro" id="IPR014710">
    <property type="entry name" value="RmlC-like_jellyroll"/>
</dbReference>
<dbReference type="InterPro" id="IPR011051">
    <property type="entry name" value="RmlC_Cupin_sf"/>
</dbReference>
<dbReference type="NCBIfam" id="NF002091">
    <property type="entry name" value="PRK00924.1"/>
    <property type="match status" value="1"/>
</dbReference>
<dbReference type="PANTHER" id="PTHR38461">
    <property type="entry name" value="4-DEOXY-L-THREO-5-HEXOSULOSE-URONATE KETOL-ISOMERASE"/>
    <property type="match status" value="1"/>
</dbReference>
<dbReference type="PANTHER" id="PTHR38461:SF1">
    <property type="entry name" value="4-DEOXY-L-THREO-5-HEXOSULOSE-URONATE KETOL-ISOMERASE"/>
    <property type="match status" value="1"/>
</dbReference>
<dbReference type="Pfam" id="PF04962">
    <property type="entry name" value="KduI"/>
    <property type="match status" value="1"/>
</dbReference>
<dbReference type="PIRSF" id="PIRSF006625">
    <property type="entry name" value="KduI"/>
    <property type="match status" value="1"/>
</dbReference>
<dbReference type="SUPFAM" id="SSF51182">
    <property type="entry name" value="RmlC-like cupins"/>
    <property type="match status" value="1"/>
</dbReference>
<gene>
    <name evidence="1" type="primary">kduI</name>
    <name type="ordered locus">YpsIP31758_1694</name>
</gene>
<proteinExistence type="inferred from homology"/>
<name>KDUI_YERP3</name>
<sequence length="278" mass="31097">MQVRQSIHSDHAKQLDTAGLRREFLIEKIFAADDYTMTYSHIDRIIVGGILPVSKAVSIGNEVGKQLGVSYFLERRELGAINIGGPGLIVVDGQTYEIGNEEALYVGKGAKEVKFSSIDRANPAKFYYNSAPAHTTYPNKKITLAEASPQTLGDDATSNRRTINKYIVPDVLPTCQLSMGLTKLAPGSLWNTMPCHTHERRMEVYFYFDMDEETAVFHMMGQPQETRHLLVHNEQAVISPSWSIHSGVGTKRYTFIWGMVGENQVFGDMDHIAVSELR</sequence>
<comment type="function">
    <text evidence="1">Catalyzes the isomerization of 5-dehydro-4-deoxy-D-glucuronate to 3-deoxy-D-glycero-2,5-hexodiulosonate.</text>
</comment>
<comment type="catalytic activity">
    <reaction evidence="1">
        <text>5-dehydro-4-deoxy-D-glucuronate = 3-deoxy-D-glycero-2,5-hexodiulosonate</text>
        <dbReference type="Rhea" id="RHEA:23896"/>
        <dbReference type="ChEBI" id="CHEBI:17117"/>
        <dbReference type="ChEBI" id="CHEBI:29071"/>
        <dbReference type="EC" id="5.3.1.17"/>
    </reaction>
</comment>
<comment type="cofactor">
    <cofactor evidence="1">
        <name>Zn(2+)</name>
        <dbReference type="ChEBI" id="CHEBI:29105"/>
    </cofactor>
    <text evidence="1">Binds 1 zinc ion per subunit.</text>
</comment>
<comment type="pathway">
    <text evidence="1">Glycan metabolism; pectin degradation; 2-dehydro-3-deoxy-D-gluconate from pectin: step 4/5.</text>
</comment>
<comment type="similarity">
    <text evidence="1">Belongs to the KduI family.</text>
</comment>